<proteinExistence type="inferred from homology"/>
<name>RL27_METI4</name>
<dbReference type="EMBL" id="CP000975">
    <property type="protein sequence ID" value="ACD83321.1"/>
    <property type="molecule type" value="Genomic_DNA"/>
</dbReference>
<dbReference type="RefSeq" id="WP_012463603.1">
    <property type="nucleotide sequence ID" value="NC_010794.1"/>
</dbReference>
<dbReference type="SMR" id="B3DVG8"/>
<dbReference type="STRING" id="481448.Minf_1267"/>
<dbReference type="KEGG" id="min:Minf_1267"/>
<dbReference type="eggNOG" id="COG0211">
    <property type="taxonomic scope" value="Bacteria"/>
</dbReference>
<dbReference type="HOGENOM" id="CLU_095424_4_1_0"/>
<dbReference type="OrthoDB" id="9803474at2"/>
<dbReference type="Proteomes" id="UP000009149">
    <property type="component" value="Chromosome"/>
</dbReference>
<dbReference type="GO" id="GO:1990904">
    <property type="term" value="C:ribonucleoprotein complex"/>
    <property type="evidence" value="ECO:0007669"/>
    <property type="project" value="UniProtKB-KW"/>
</dbReference>
<dbReference type="GO" id="GO:0005840">
    <property type="term" value="C:ribosome"/>
    <property type="evidence" value="ECO:0007669"/>
    <property type="project" value="UniProtKB-KW"/>
</dbReference>
<dbReference type="GO" id="GO:0003735">
    <property type="term" value="F:structural constituent of ribosome"/>
    <property type="evidence" value="ECO:0007669"/>
    <property type="project" value="InterPro"/>
</dbReference>
<dbReference type="GO" id="GO:0006412">
    <property type="term" value="P:translation"/>
    <property type="evidence" value="ECO:0007669"/>
    <property type="project" value="UniProtKB-UniRule"/>
</dbReference>
<dbReference type="FunFam" id="2.40.50.100:FF:000060">
    <property type="entry name" value="Apicoplast ribosomal protein L27"/>
    <property type="match status" value="1"/>
</dbReference>
<dbReference type="Gene3D" id="2.40.50.100">
    <property type="match status" value="1"/>
</dbReference>
<dbReference type="HAMAP" id="MF_00539">
    <property type="entry name" value="Ribosomal_bL27"/>
    <property type="match status" value="1"/>
</dbReference>
<dbReference type="InterPro" id="IPR001684">
    <property type="entry name" value="Ribosomal_bL27"/>
</dbReference>
<dbReference type="InterPro" id="IPR018261">
    <property type="entry name" value="Ribosomal_bL27_CS"/>
</dbReference>
<dbReference type="NCBIfam" id="TIGR00062">
    <property type="entry name" value="L27"/>
    <property type="match status" value="1"/>
</dbReference>
<dbReference type="PANTHER" id="PTHR15893:SF0">
    <property type="entry name" value="LARGE RIBOSOMAL SUBUNIT PROTEIN BL27M"/>
    <property type="match status" value="1"/>
</dbReference>
<dbReference type="PANTHER" id="PTHR15893">
    <property type="entry name" value="RIBOSOMAL PROTEIN L27"/>
    <property type="match status" value="1"/>
</dbReference>
<dbReference type="Pfam" id="PF01016">
    <property type="entry name" value="Ribosomal_L27"/>
    <property type="match status" value="1"/>
</dbReference>
<dbReference type="PRINTS" id="PR00063">
    <property type="entry name" value="RIBOSOMALL27"/>
</dbReference>
<dbReference type="SUPFAM" id="SSF110324">
    <property type="entry name" value="Ribosomal L27 protein-like"/>
    <property type="match status" value="1"/>
</dbReference>
<dbReference type="PROSITE" id="PS00831">
    <property type="entry name" value="RIBOSOMAL_L27"/>
    <property type="match status" value="1"/>
</dbReference>
<evidence type="ECO:0000255" key="1">
    <source>
        <dbReference type="HAMAP-Rule" id="MF_00539"/>
    </source>
</evidence>
<evidence type="ECO:0000256" key="2">
    <source>
        <dbReference type="SAM" id="MobiDB-lite"/>
    </source>
</evidence>
<evidence type="ECO:0000305" key="3"/>
<organism>
    <name type="scientific">Methylacidiphilum infernorum (isolate V4)</name>
    <name type="common">Methylokorus infernorum (strain V4)</name>
    <dbReference type="NCBI Taxonomy" id="481448"/>
    <lineage>
        <taxon>Bacteria</taxon>
        <taxon>Pseudomonadati</taxon>
        <taxon>Verrucomicrobiota</taxon>
        <taxon>Methylacidiphilae</taxon>
        <taxon>Methylacidiphilales</taxon>
        <taxon>Methylacidiphilaceae</taxon>
        <taxon>Methylacidiphilum (ex Ratnadevi et al. 2023)</taxon>
    </lineage>
</organism>
<keyword id="KW-0687">Ribonucleoprotein</keyword>
<keyword id="KW-0689">Ribosomal protein</keyword>
<reference key="1">
    <citation type="journal article" date="2008" name="Biol. Direct">
        <title>Complete genome sequence of the extremely acidophilic methanotroph isolate V4, Methylacidiphilum infernorum, a representative of the bacterial phylum Verrucomicrobia.</title>
        <authorList>
            <person name="Hou S."/>
            <person name="Makarova K.S."/>
            <person name="Saw J.H."/>
            <person name="Senin P."/>
            <person name="Ly B.V."/>
            <person name="Zhou Z."/>
            <person name="Ren Y."/>
            <person name="Wang J."/>
            <person name="Galperin M.Y."/>
            <person name="Omelchenko M.V."/>
            <person name="Wolf Y.I."/>
            <person name="Yutin N."/>
            <person name="Koonin E.V."/>
            <person name="Stott M.B."/>
            <person name="Mountain B.W."/>
            <person name="Crowe M.A."/>
            <person name="Smirnova A.V."/>
            <person name="Dunfield P.F."/>
            <person name="Feng L."/>
            <person name="Wang L."/>
            <person name="Alam M."/>
        </authorList>
    </citation>
    <scope>NUCLEOTIDE SEQUENCE [LARGE SCALE GENOMIC DNA]</scope>
    <source>
        <strain>Isolate V4</strain>
    </source>
</reference>
<accession>B3DVG8</accession>
<gene>
    <name evidence="1" type="primary">rpmA</name>
    <name type="ordered locus">Minf_1267</name>
</gene>
<sequence>MAHKKGQGSTRNGRDSHSKRLGIKEFSGEVVKAGHILLRQRGTKFKPGKNVGMGRDFTLYSLVHGQVEWDGSRRLVHVKPFNTA</sequence>
<protein>
    <recommendedName>
        <fullName evidence="1">Large ribosomal subunit protein bL27</fullName>
    </recommendedName>
    <alternativeName>
        <fullName evidence="3">50S ribosomal protein L27</fullName>
    </alternativeName>
</protein>
<feature type="chain" id="PRO_1000128770" description="Large ribosomal subunit protein bL27">
    <location>
        <begin position="1"/>
        <end position="84"/>
    </location>
</feature>
<feature type="region of interest" description="Disordered" evidence="2">
    <location>
        <begin position="1"/>
        <end position="21"/>
    </location>
</feature>
<feature type="compositionally biased region" description="Basic and acidic residues" evidence="2">
    <location>
        <begin position="12"/>
        <end position="21"/>
    </location>
</feature>
<comment type="similarity">
    <text evidence="1">Belongs to the bacterial ribosomal protein bL27 family.</text>
</comment>